<protein>
    <recommendedName>
        <fullName evidence="6">Cytochrome P450 709B1</fullName>
        <ecNumber evidence="6">1.14.-.-</ecNumber>
    </recommendedName>
</protein>
<name>C7091_ARATH</name>
<dbReference type="EC" id="1.14.-.-" evidence="6"/>
<dbReference type="EMBL" id="AC004411">
    <property type="protein sequence ID" value="AAC34227.2"/>
    <property type="molecule type" value="Genomic_DNA"/>
</dbReference>
<dbReference type="EMBL" id="CP002685">
    <property type="protein sequence ID" value="AEC10778.1"/>
    <property type="molecule type" value="Genomic_DNA"/>
</dbReference>
<dbReference type="EMBL" id="AF367329">
    <property type="protein sequence ID" value="AAK32916.1"/>
    <property type="molecule type" value="mRNA"/>
</dbReference>
<dbReference type="EMBL" id="AY091688">
    <property type="protein sequence ID" value="AAM10287.1"/>
    <property type="molecule type" value="mRNA"/>
</dbReference>
<dbReference type="PIR" id="T02191">
    <property type="entry name" value="T02191"/>
</dbReference>
<dbReference type="RefSeq" id="NP_566092.1">
    <molecule id="Q9ASR3-1"/>
    <property type="nucleotide sequence ID" value="NM_130264.2"/>
</dbReference>
<dbReference type="SMR" id="Q9ASR3"/>
<dbReference type="FunCoup" id="Q9ASR3">
    <property type="interactions" value="323"/>
</dbReference>
<dbReference type="STRING" id="3702.Q9ASR3"/>
<dbReference type="GlyGen" id="Q9ASR3">
    <property type="glycosylation" value="1 site"/>
</dbReference>
<dbReference type="PaxDb" id="3702-AT2G46960.2"/>
<dbReference type="ProteomicsDB" id="240265">
    <molecule id="Q9ASR3-1"/>
</dbReference>
<dbReference type="EnsemblPlants" id="AT2G46960.2">
    <molecule id="Q9ASR3-1"/>
    <property type="protein sequence ID" value="AT2G46960.2"/>
    <property type="gene ID" value="AT2G46960"/>
</dbReference>
<dbReference type="GeneID" id="819310"/>
<dbReference type="Gramene" id="AT2G46960.2">
    <molecule id="Q9ASR3-1"/>
    <property type="protein sequence ID" value="AT2G46960.2"/>
    <property type="gene ID" value="AT2G46960"/>
</dbReference>
<dbReference type="KEGG" id="ath:AT2G46960"/>
<dbReference type="Araport" id="AT2G46960"/>
<dbReference type="TAIR" id="AT2G46960">
    <property type="gene designation" value="CYP709B1"/>
</dbReference>
<dbReference type="eggNOG" id="KOG0157">
    <property type="taxonomic scope" value="Eukaryota"/>
</dbReference>
<dbReference type="InParanoid" id="Q9ASR3"/>
<dbReference type="OMA" id="HEMKYIE"/>
<dbReference type="PhylomeDB" id="Q9ASR3"/>
<dbReference type="BioCyc" id="ARA:AT2G46960-MONOMER"/>
<dbReference type="PRO" id="PR:Q9ASR3"/>
<dbReference type="Proteomes" id="UP000006548">
    <property type="component" value="Chromosome 2"/>
</dbReference>
<dbReference type="ExpressionAtlas" id="Q9ASR3">
    <property type="expression patterns" value="baseline and differential"/>
</dbReference>
<dbReference type="GO" id="GO:0016020">
    <property type="term" value="C:membrane"/>
    <property type="evidence" value="ECO:0007669"/>
    <property type="project" value="UniProtKB-SubCell"/>
</dbReference>
<dbReference type="GO" id="GO:0020037">
    <property type="term" value="F:heme binding"/>
    <property type="evidence" value="ECO:0007669"/>
    <property type="project" value="InterPro"/>
</dbReference>
<dbReference type="GO" id="GO:0005506">
    <property type="term" value="F:iron ion binding"/>
    <property type="evidence" value="ECO:0007669"/>
    <property type="project" value="InterPro"/>
</dbReference>
<dbReference type="GO" id="GO:0004497">
    <property type="term" value="F:monooxygenase activity"/>
    <property type="evidence" value="ECO:0007669"/>
    <property type="project" value="UniProtKB-KW"/>
</dbReference>
<dbReference type="GO" id="GO:0016705">
    <property type="term" value="F:oxidoreductase activity, acting on paired donors, with incorporation or reduction of molecular oxygen"/>
    <property type="evidence" value="ECO:0007669"/>
    <property type="project" value="InterPro"/>
</dbReference>
<dbReference type="CDD" id="cd20641">
    <property type="entry name" value="CYP709"/>
    <property type="match status" value="1"/>
</dbReference>
<dbReference type="Gene3D" id="1.10.630.10">
    <property type="entry name" value="Cytochrome P450"/>
    <property type="match status" value="1"/>
</dbReference>
<dbReference type="InterPro" id="IPR001128">
    <property type="entry name" value="Cyt_P450"/>
</dbReference>
<dbReference type="InterPro" id="IPR017972">
    <property type="entry name" value="Cyt_P450_CS"/>
</dbReference>
<dbReference type="InterPro" id="IPR002401">
    <property type="entry name" value="Cyt_P450_E_grp-I"/>
</dbReference>
<dbReference type="InterPro" id="IPR036396">
    <property type="entry name" value="Cyt_P450_sf"/>
</dbReference>
<dbReference type="InterPro" id="IPR050665">
    <property type="entry name" value="Cytochrome_P450_Monooxygen"/>
</dbReference>
<dbReference type="PANTHER" id="PTHR24282:SF142">
    <property type="entry name" value="CYTOCHROME P450 709B1"/>
    <property type="match status" value="1"/>
</dbReference>
<dbReference type="PANTHER" id="PTHR24282">
    <property type="entry name" value="CYTOCHROME P450 FAMILY MEMBER"/>
    <property type="match status" value="1"/>
</dbReference>
<dbReference type="Pfam" id="PF00067">
    <property type="entry name" value="p450"/>
    <property type="match status" value="1"/>
</dbReference>
<dbReference type="PRINTS" id="PR00463">
    <property type="entry name" value="EP450I"/>
</dbReference>
<dbReference type="PRINTS" id="PR00385">
    <property type="entry name" value="P450"/>
</dbReference>
<dbReference type="SUPFAM" id="SSF48264">
    <property type="entry name" value="Cytochrome P450"/>
    <property type="match status" value="1"/>
</dbReference>
<dbReference type="PROSITE" id="PS00086">
    <property type="entry name" value="CYTOCHROME_P450"/>
    <property type="match status" value="1"/>
</dbReference>
<proteinExistence type="evidence at transcript level"/>
<gene>
    <name evidence="5" type="primary">CYP709B1</name>
    <name evidence="8" type="ordered locus">At2g46960</name>
</gene>
<accession>Q9ASR3</accession>
<accession>O80728</accession>
<organism>
    <name type="scientific">Arabidopsis thaliana</name>
    <name type="common">Mouse-ear cress</name>
    <dbReference type="NCBI Taxonomy" id="3702"/>
    <lineage>
        <taxon>Eukaryota</taxon>
        <taxon>Viridiplantae</taxon>
        <taxon>Streptophyta</taxon>
        <taxon>Embryophyta</taxon>
        <taxon>Tracheophyta</taxon>
        <taxon>Spermatophyta</taxon>
        <taxon>Magnoliopsida</taxon>
        <taxon>eudicotyledons</taxon>
        <taxon>Gunneridae</taxon>
        <taxon>Pentapetalae</taxon>
        <taxon>rosids</taxon>
        <taxon>malvids</taxon>
        <taxon>Brassicales</taxon>
        <taxon>Brassicaceae</taxon>
        <taxon>Camelineae</taxon>
        <taxon>Arabidopsis</taxon>
    </lineage>
</organism>
<reference key="1">
    <citation type="journal article" date="1999" name="Nature">
        <title>Sequence and analysis of chromosome 2 of the plant Arabidopsis thaliana.</title>
        <authorList>
            <person name="Lin X."/>
            <person name="Kaul S."/>
            <person name="Rounsley S.D."/>
            <person name="Shea T.P."/>
            <person name="Benito M.-I."/>
            <person name="Town C.D."/>
            <person name="Fujii C.Y."/>
            <person name="Mason T.M."/>
            <person name="Bowman C.L."/>
            <person name="Barnstead M.E."/>
            <person name="Feldblyum T.V."/>
            <person name="Buell C.R."/>
            <person name="Ketchum K.A."/>
            <person name="Lee J.J."/>
            <person name="Ronning C.M."/>
            <person name="Koo H.L."/>
            <person name="Moffat K.S."/>
            <person name="Cronin L.A."/>
            <person name="Shen M."/>
            <person name="Pai G."/>
            <person name="Van Aken S."/>
            <person name="Umayam L."/>
            <person name="Tallon L.J."/>
            <person name="Gill J.E."/>
            <person name="Adams M.D."/>
            <person name="Carrera A.J."/>
            <person name="Creasy T.H."/>
            <person name="Goodman H.M."/>
            <person name="Somerville C.R."/>
            <person name="Copenhaver G.P."/>
            <person name="Preuss D."/>
            <person name="Nierman W.C."/>
            <person name="White O."/>
            <person name="Eisen J.A."/>
            <person name="Salzberg S.L."/>
            <person name="Fraser C.M."/>
            <person name="Venter J.C."/>
        </authorList>
    </citation>
    <scope>NUCLEOTIDE SEQUENCE [LARGE SCALE GENOMIC DNA]</scope>
    <source>
        <strain>cv. Columbia</strain>
    </source>
</reference>
<reference key="2">
    <citation type="journal article" date="2017" name="Plant J.">
        <title>Araport11: a complete reannotation of the Arabidopsis thaliana reference genome.</title>
        <authorList>
            <person name="Cheng C.Y."/>
            <person name="Krishnakumar V."/>
            <person name="Chan A.P."/>
            <person name="Thibaud-Nissen F."/>
            <person name="Schobel S."/>
            <person name="Town C.D."/>
        </authorList>
    </citation>
    <scope>GENOME REANNOTATION</scope>
    <source>
        <strain>cv. Columbia</strain>
    </source>
</reference>
<reference key="3">
    <citation type="journal article" date="2003" name="Science">
        <title>Empirical analysis of transcriptional activity in the Arabidopsis genome.</title>
        <authorList>
            <person name="Yamada K."/>
            <person name="Lim J."/>
            <person name="Dale J.M."/>
            <person name="Chen H."/>
            <person name="Shinn P."/>
            <person name="Palm C.J."/>
            <person name="Southwick A.M."/>
            <person name="Wu H.C."/>
            <person name="Kim C.J."/>
            <person name="Nguyen M."/>
            <person name="Pham P.K."/>
            <person name="Cheuk R.F."/>
            <person name="Karlin-Newmann G."/>
            <person name="Liu S.X."/>
            <person name="Lam B."/>
            <person name="Sakano H."/>
            <person name="Wu T."/>
            <person name="Yu G."/>
            <person name="Miranda M."/>
            <person name="Quach H.L."/>
            <person name="Tripp M."/>
            <person name="Chang C.H."/>
            <person name="Lee J.M."/>
            <person name="Toriumi M.J."/>
            <person name="Chan M.M."/>
            <person name="Tang C.C."/>
            <person name="Onodera C.S."/>
            <person name="Deng J.M."/>
            <person name="Akiyama K."/>
            <person name="Ansari Y."/>
            <person name="Arakawa T."/>
            <person name="Banh J."/>
            <person name="Banno F."/>
            <person name="Bowser L."/>
            <person name="Brooks S.Y."/>
            <person name="Carninci P."/>
            <person name="Chao Q."/>
            <person name="Choy N."/>
            <person name="Enju A."/>
            <person name="Goldsmith A.D."/>
            <person name="Gurjal M."/>
            <person name="Hansen N.F."/>
            <person name="Hayashizaki Y."/>
            <person name="Johnson-Hopson C."/>
            <person name="Hsuan V.W."/>
            <person name="Iida K."/>
            <person name="Karnes M."/>
            <person name="Khan S."/>
            <person name="Koesema E."/>
            <person name="Ishida J."/>
            <person name="Jiang P.X."/>
            <person name="Jones T."/>
            <person name="Kawai J."/>
            <person name="Kamiya A."/>
            <person name="Meyers C."/>
            <person name="Nakajima M."/>
            <person name="Narusaka M."/>
            <person name="Seki M."/>
            <person name="Sakurai T."/>
            <person name="Satou M."/>
            <person name="Tamse R."/>
            <person name="Vaysberg M."/>
            <person name="Wallender E.K."/>
            <person name="Wong C."/>
            <person name="Yamamura Y."/>
            <person name="Yuan S."/>
            <person name="Shinozaki K."/>
            <person name="Davis R.W."/>
            <person name="Theologis A."/>
            <person name="Ecker J.R."/>
        </authorList>
    </citation>
    <scope>NUCLEOTIDE SEQUENCE [LARGE SCALE MRNA]</scope>
    <source>
        <strain>cv. Columbia</strain>
    </source>
</reference>
<reference key="4">
    <citation type="journal article" date="2004" name="J. Biol. Chem.">
        <title>Arabidopsis CYP735A1 and CYP735A2 encode cytokinin hydroxylases that catalyze the biosynthesis of trans-Zeatin.</title>
        <authorList>
            <person name="Takei K."/>
            <person name="Yamaya T."/>
            <person name="Sakakibara H."/>
        </authorList>
    </citation>
    <scope>FUNCTION</scope>
</reference>
<reference key="5">
    <citation type="journal article" date="2013" name="BMC Plant Biol.">
        <title>CYP709B3, a cytochrome P450 monooxygenase gene involved in salt tolerance in Arabidopsis thaliana.</title>
        <authorList>
            <person name="Mao G."/>
            <person name="Seebeck T."/>
            <person name="Schrenker D."/>
            <person name="Yu O."/>
        </authorList>
    </citation>
    <scope>TISSUE SPECIFICITY</scope>
    <scope>DISRUPTION PHENOTYPE</scope>
</reference>
<sequence length="519" mass="59604">MGLVIFLALIVLILIIGLRIFKAFMILVWHPFVLTRRLKNQGISGPNYRIFYGNLSEIKKMKRESHLSILDPSSNDIFPRILPHYQKWMSQYGETFLYWNGTEPRICISDPELAKTMLSNKLGFFVKSKARPEAVKLVGSKGLVFIEGADWVRHRRILNPAFSIDRLKIMTTVMVDCTLKMLEEWRKESTKEETEHPKIKKEMNEEFQRLTADIIATSAFGSSYVEGIEVFRSQMELKRCYTTSLNQVSIPGTQYLPTPSNIRVWKLERKMDNSIKRIISSRLQSKSDYGDDLLGILLKAYNTEGKERKMSIEEIIHECRTFFFGGHETTSNLLAWTTMLLSLHQDWQEKLREEIFKECGKEKTPDSETFSKLKLMNMVIMESLRLYGPVSALAREASVNIKLGDLEIPKGTTVVIPLLKMHSDKTLWGSDADKFNPMRFANGVSRAANHPNALLAFSVGPRACIGQNFVMIEAKTVLTMILQRFRFISLCDEYKHTPVDNVTIQPQYGLPVMLQPLED</sequence>
<feature type="chain" id="PRO_0000435386" description="Cytochrome P450 709B1">
    <location>
        <begin position="1"/>
        <end position="519"/>
    </location>
</feature>
<feature type="transmembrane region" description="Helical" evidence="3">
    <location>
        <begin position="1"/>
        <end position="21"/>
    </location>
</feature>
<feature type="binding site" description="axial binding residue" evidence="1">
    <location>
        <position position="464"/>
    </location>
    <ligand>
        <name>heme</name>
        <dbReference type="ChEBI" id="CHEBI:30413"/>
    </ligand>
    <ligandPart>
        <name>Fe</name>
        <dbReference type="ChEBI" id="CHEBI:18248"/>
    </ligandPart>
</feature>
<comment type="function">
    <text evidence="2 7">Involved in stress response (By similarity). Does not function as cytokinin hydroxylase in yeast heterologous system (Probable).</text>
</comment>
<comment type="cofactor">
    <cofactor evidence="1">
        <name>heme</name>
        <dbReference type="ChEBI" id="CHEBI:30413"/>
    </cofactor>
</comment>
<comment type="subcellular location">
    <subcellularLocation>
        <location evidence="3">Membrane</location>
        <topology evidence="3">Single-pass membrane protein</topology>
    </subcellularLocation>
</comment>
<comment type="alternative products">
    <event type="alternative splicing"/>
    <isoform>
        <id>Q9ASR3-1</id>
        <name>1</name>
        <sequence type="displayed"/>
    </isoform>
    <text evidence="6">A number of isoforms are produced. According to EST sequences.</text>
</comment>
<comment type="tissue specificity">
    <text evidence="4">Highly expressed in siliques.</text>
</comment>
<comment type="disruption phenotype">
    <text evidence="4">No visible phenotype under normal growth conditions.</text>
</comment>
<comment type="similarity">
    <text evidence="6">Belongs to the cytochrome P450 family.</text>
</comment>
<evidence type="ECO:0000250" key="1">
    <source>
        <dbReference type="UniProtKB" id="P04798"/>
    </source>
</evidence>
<evidence type="ECO:0000250" key="2">
    <source>
        <dbReference type="UniProtKB" id="Q9T093"/>
    </source>
</evidence>
<evidence type="ECO:0000255" key="3"/>
<evidence type="ECO:0000269" key="4">
    <source>
    </source>
</evidence>
<evidence type="ECO:0000303" key="5">
    <source>
    </source>
</evidence>
<evidence type="ECO:0000305" key="6"/>
<evidence type="ECO:0000305" key="7">
    <source>
    </source>
</evidence>
<evidence type="ECO:0000312" key="8">
    <source>
        <dbReference type="Araport" id="AT2G46960"/>
    </source>
</evidence>
<keyword id="KW-0025">Alternative splicing</keyword>
<keyword id="KW-0349">Heme</keyword>
<keyword id="KW-0408">Iron</keyword>
<keyword id="KW-0472">Membrane</keyword>
<keyword id="KW-0479">Metal-binding</keyword>
<keyword id="KW-0503">Monooxygenase</keyword>
<keyword id="KW-0560">Oxidoreductase</keyword>
<keyword id="KW-1185">Reference proteome</keyword>
<keyword id="KW-0346">Stress response</keyword>
<keyword id="KW-0812">Transmembrane</keyword>
<keyword id="KW-1133">Transmembrane helix</keyword>